<reference key="1">
    <citation type="journal article" date="1999" name="FEBS Lett.">
        <title>The mitochondrial TIM22 preprotein translocase is highly conserved throughout the eukaryotic kingdom.</title>
        <authorList>
            <person name="Bauer M.F."/>
            <person name="Rothbauer U."/>
            <person name="Muehlenbein N."/>
            <person name="Smith R.J.H."/>
            <person name="Gerbitz K.-D."/>
            <person name="Neupert W."/>
            <person name="Brunner M."/>
            <person name="Hofmann S."/>
        </authorList>
    </citation>
    <scope>NUCLEOTIDE SEQUENCE [MRNA]</scope>
</reference>
<reference key="2">
    <citation type="journal article" date="2005" name="Science">
        <title>The transcriptional landscape of the mammalian genome.</title>
        <authorList>
            <person name="Carninci P."/>
            <person name="Kasukawa T."/>
            <person name="Katayama S."/>
            <person name="Gough J."/>
            <person name="Frith M.C."/>
            <person name="Maeda N."/>
            <person name="Oyama R."/>
            <person name="Ravasi T."/>
            <person name="Lenhard B."/>
            <person name="Wells C."/>
            <person name="Kodzius R."/>
            <person name="Shimokawa K."/>
            <person name="Bajic V.B."/>
            <person name="Brenner S.E."/>
            <person name="Batalov S."/>
            <person name="Forrest A.R."/>
            <person name="Zavolan M."/>
            <person name="Davis M.J."/>
            <person name="Wilming L.G."/>
            <person name="Aidinis V."/>
            <person name="Allen J.E."/>
            <person name="Ambesi-Impiombato A."/>
            <person name="Apweiler R."/>
            <person name="Aturaliya R.N."/>
            <person name="Bailey T.L."/>
            <person name="Bansal M."/>
            <person name="Baxter L."/>
            <person name="Beisel K.W."/>
            <person name="Bersano T."/>
            <person name="Bono H."/>
            <person name="Chalk A.M."/>
            <person name="Chiu K.P."/>
            <person name="Choudhary V."/>
            <person name="Christoffels A."/>
            <person name="Clutterbuck D.R."/>
            <person name="Crowe M.L."/>
            <person name="Dalla E."/>
            <person name="Dalrymple B.P."/>
            <person name="de Bono B."/>
            <person name="Della Gatta G."/>
            <person name="di Bernardo D."/>
            <person name="Down T."/>
            <person name="Engstrom P."/>
            <person name="Fagiolini M."/>
            <person name="Faulkner G."/>
            <person name="Fletcher C.F."/>
            <person name="Fukushima T."/>
            <person name="Furuno M."/>
            <person name="Futaki S."/>
            <person name="Gariboldi M."/>
            <person name="Georgii-Hemming P."/>
            <person name="Gingeras T.R."/>
            <person name="Gojobori T."/>
            <person name="Green R.E."/>
            <person name="Gustincich S."/>
            <person name="Harbers M."/>
            <person name="Hayashi Y."/>
            <person name="Hensch T.K."/>
            <person name="Hirokawa N."/>
            <person name="Hill D."/>
            <person name="Huminiecki L."/>
            <person name="Iacono M."/>
            <person name="Ikeo K."/>
            <person name="Iwama A."/>
            <person name="Ishikawa T."/>
            <person name="Jakt M."/>
            <person name="Kanapin A."/>
            <person name="Katoh M."/>
            <person name="Kawasawa Y."/>
            <person name="Kelso J."/>
            <person name="Kitamura H."/>
            <person name="Kitano H."/>
            <person name="Kollias G."/>
            <person name="Krishnan S.P."/>
            <person name="Kruger A."/>
            <person name="Kummerfeld S.K."/>
            <person name="Kurochkin I.V."/>
            <person name="Lareau L.F."/>
            <person name="Lazarevic D."/>
            <person name="Lipovich L."/>
            <person name="Liu J."/>
            <person name="Liuni S."/>
            <person name="McWilliam S."/>
            <person name="Madan Babu M."/>
            <person name="Madera M."/>
            <person name="Marchionni L."/>
            <person name="Matsuda H."/>
            <person name="Matsuzawa S."/>
            <person name="Miki H."/>
            <person name="Mignone F."/>
            <person name="Miyake S."/>
            <person name="Morris K."/>
            <person name="Mottagui-Tabar S."/>
            <person name="Mulder N."/>
            <person name="Nakano N."/>
            <person name="Nakauchi H."/>
            <person name="Ng P."/>
            <person name="Nilsson R."/>
            <person name="Nishiguchi S."/>
            <person name="Nishikawa S."/>
            <person name="Nori F."/>
            <person name="Ohara O."/>
            <person name="Okazaki Y."/>
            <person name="Orlando V."/>
            <person name="Pang K.C."/>
            <person name="Pavan W.J."/>
            <person name="Pavesi G."/>
            <person name="Pesole G."/>
            <person name="Petrovsky N."/>
            <person name="Piazza S."/>
            <person name="Reed J."/>
            <person name="Reid J.F."/>
            <person name="Ring B.Z."/>
            <person name="Ringwald M."/>
            <person name="Rost B."/>
            <person name="Ruan Y."/>
            <person name="Salzberg S.L."/>
            <person name="Sandelin A."/>
            <person name="Schneider C."/>
            <person name="Schoenbach C."/>
            <person name="Sekiguchi K."/>
            <person name="Semple C.A."/>
            <person name="Seno S."/>
            <person name="Sessa L."/>
            <person name="Sheng Y."/>
            <person name="Shibata Y."/>
            <person name="Shimada H."/>
            <person name="Shimada K."/>
            <person name="Silva D."/>
            <person name="Sinclair B."/>
            <person name="Sperling S."/>
            <person name="Stupka E."/>
            <person name="Sugiura K."/>
            <person name="Sultana R."/>
            <person name="Takenaka Y."/>
            <person name="Taki K."/>
            <person name="Tammoja K."/>
            <person name="Tan S.L."/>
            <person name="Tang S."/>
            <person name="Taylor M.S."/>
            <person name="Tegner J."/>
            <person name="Teichmann S.A."/>
            <person name="Ueda H.R."/>
            <person name="van Nimwegen E."/>
            <person name="Verardo R."/>
            <person name="Wei C.L."/>
            <person name="Yagi K."/>
            <person name="Yamanishi H."/>
            <person name="Zabarovsky E."/>
            <person name="Zhu S."/>
            <person name="Zimmer A."/>
            <person name="Hide W."/>
            <person name="Bult C."/>
            <person name="Grimmond S.M."/>
            <person name="Teasdale R.D."/>
            <person name="Liu E.T."/>
            <person name="Brusic V."/>
            <person name="Quackenbush J."/>
            <person name="Wahlestedt C."/>
            <person name="Mattick J.S."/>
            <person name="Hume D.A."/>
            <person name="Kai C."/>
            <person name="Sasaki D."/>
            <person name="Tomaru Y."/>
            <person name="Fukuda S."/>
            <person name="Kanamori-Katayama M."/>
            <person name="Suzuki M."/>
            <person name="Aoki J."/>
            <person name="Arakawa T."/>
            <person name="Iida J."/>
            <person name="Imamura K."/>
            <person name="Itoh M."/>
            <person name="Kato T."/>
            <person name="Kawaji H."/>
            <person name="Kawagashira N."/>
            <person name="Kawashima T."/>
            <person name="Kojima M."/>
            <person name="Kondo S."/>
            <person name="Konno H."/>
            <person name="Nakano K."/>
            <person name="Ninomiya N."/>
            <person name="Nishio T."/>
            <person name="Okada M."/>
            <person name="Plessy C."/>
            <person name="Shibata K."/>
            <person name="Shiraki T."/>
            <person name="Suzuki S."/>
            <person name="Tagami M."/>
            <person name="Waki K."/>
            <person name="Watahiki A."/>
            <person name="Okamura-Oho Y."/>
            <person name="Suzuki H."/>
            <person name="Kawai J."/>
            <person name="Hayashizaki Y."/>
        </authorList>
    </citation>
    <scope>NUCLEOTIDE SEQUENCE [LARGE SCALE MRNA]</scope>
    <source>
        <strain>C57BL/6J</strain>
        <tissue>Brain</tissue>
        <tissue>Mammary gland</tissue>
    </source>
</reference>
<reference key="3">
    <citation type="journal article" date="2004" name="Genome Res.">
        <title>The status, quality, and expansion of the NIH full-length cDNA project: the Mammalian Gene Collection (MGC).</title>
        <authorList>
            <consortium name="The MGC Project Team"/>
        </authorList>
    </citation>
    <scope>NUCLEOTIDE SEQUENCE [LARGE SCALE MRNA]</scope>
    <source>
        <strain>129</strain>
        <tissue>Mammary gland</tissue>
    </source>
</reference>
<reference key="4">
    <citation type="journal article" date="2010" name="Cell">
        <title>A tissue-specific atlas of mouse protein phosphorylation and expression.</title>
        <authorList>
            <person name="Huttlin E.L."/>
            <person name="Jedrychowski M.P."/>
            <person name="Elias J.E."/>
            <person name="Goswami T."/>
            <person name="Rad R."/>
            <person name="Beausoleil S.A."/>
            <person name="Villen J."/>
            <person name="Haas W."/>
            <person name="Sowa M.E."/>
            <person name="Gygi S.P."/>
        </authorList>
    </citation>
    <scope>IDENTIFICATION BY MASS SPECTROMETRY [LARGE SCALE ANALYSIS]</scope>
    <source>
        <tissue>Brown adipose tissue</tissue>
        <tissue>Heart</tissue>
        <tissue>Kidney</tissue>
        <tissue>Liver</tissue>
        <tissue>Pancreas</tissue>
        <tissue>Spleen</tissue>
    </source>
</reference>
<sequence>MEQQQQQLRNLRDFLLVYNRMTELCFQRCVPSLHHRALDAEEEACLHSCAGKLIHSNHRLMAAYVHLMPALVQRRIADYEAASAAPGIPAEQTRDSPSGS</sequence>
<evidence type="ECO:0000250" key="1">
    <source>
        <dbReference type="UniProtKB" id="P87108"/>
    </source>
</evidence>
<evidence type="ECO:0000250" key="2">
    <source>
        <dbReference type="UniProtKB" id="Q9Y5J6"/>
    </source>
</evidence>
<evidence type="ECO:0000305" key="3"/>
<accession>Q9WV96</accession>
<accession>Q545D2</accession>
<accession>Q9DCB5</accession>
<gene>
    <name type="primary">Timm10b</name>
    <name type="synonym">Fxc1</name>
    <name type="synonym">Tim9b</name>
    <name type="synonym">Timm9b</name>
</gene>
<proteinExistence type="evidence at protein level"/>
<protein>
    <recommendedName>
        <fullName>Mitochondrial import inner membrane translocase subunit Tim10 B</fullName>
    </recommendedName>
    <alternativeName>
        <fullName>Mitochondrial import inner membrane translocase subunit Tim9 B</fullName>
    </alternativeName>
    <alternativeName>
        <fullName>TIMM10B</fullName>
        <shortName>Tim10b</shortName>
    </alternativeName>
</protein>
<feature type="chain" id="PRO_0000193599" description="Mitochondrial import inner membrane translocase subunit Tim10 B">
    <location>
        <begin position="1"/>
        <end position="100"/>
    </location>
</feature>
<feature type="short sequence motif" description="Twin CX3C motif">
    <location>
        <begin position="25"/>
        <end position="49"/>
    </location>
</feature>
<feature type="disulfide bond" evidence="1">
    <location>
        <begin position="25"/>
        <end position="49"/>
    </location>
</feature>
<feature type="disulfide bond" evidence="1">
    <location>
        <begin position="29"/>
        <end position="45"/>
    </location>
</feature>
<feature type="sequence conflict" description="In Ref. 2; BAB22474." evidence="3" ref="2">
    <original>A</original>
    <variation>V</variation>
    <location>
        <position position="37"/>
    </location>
</feature>
<keyword id="KW-1015">Disulfide bond</keyword>
<keyword id="KW-0472">Membrane</keyword>
<keyword id="KW-0479">Metal-binding</keyword>
<keyword id="KW-0496">Mitochondrion</keyword>
<keyword id="KW-0999">Mitochondrion inner membrane</keyword>
<keyword id="KW-0653">Protein transport</keyword>
<keyword id="KW-1185">Reference proteome</keyword>
<keyword id="KW-0811">Translocation</keyword>
<keyword id="KW-0813">Transport</keyword>
<keyword id="KW-0862">Zinc</keyword>
<comment type="function">
    <text evidence="2">Component of the TIM22 complex, a complex that mediates the import and insertion of multi-pass transmembrane proteins into the mitochondrial inner membrane. The TIM22 complex forms a twin-pore translocase that uses the membrane potential as the external driving force. In the TIM22 complex, it may act as a docking point for the soluble 70 kDa complex that guides the target proteins in transit through the aqueous mitochondrial intermembrane space.</text>
</comment>
<comment type="subunit">
    <text evidence="2">Component of the TIM22 complex, which core is composed of TIMM22, associated with TIMM10 (TIMM10A and/or TIMM10B), TIMM9, AGK and TIMM29.</text>
</comment>
<comment type="subcellular location">
    <subcellularLocation>
        <location evidence="2">Mitochondrion inner membrane</location>
        <topology evidence="2">Peripheral membrane protein</topology>
    </subcellularLocation>
</comment>
<comment type="domain">
    <text evidence="1">The twin CX3C motif contains 4 conserved Cys residues that form 2 disulfide bonds in the mitochondrial intermembrane space. However, during the transit of TIMM10B from cytoplasm into mitochondrion, the Cys residues probably coordinate zinc, thereby preventing folding and allowing its transfer across mitochondrial outer membrane.</text>
</comment>
<comment type="similarity">
    <text evidence="3">Belongs to the small Tim family.</text>
</comment>
<organism>
    <name type="scientific">Mus musculus</name>
    <name type="common">Mouse</name>
    <dbReference type="NCBI Taxonomy" id="10090"/>
    <lineage>
        <taxon>Eukaryota</taxon>
        <taxon>Metazoa</taxon>
        <taxon>Chordata</taxon>
        <taxon>Craniata</taxon>
        <taxon>Vertebrata</taxon>
        <taxon>Euteleostomi</taxon>
        <taxon>Mammalia</taxon>
        <taxon>Eutheria</taxon>
        <taxon>Euarchontoglires</taxon>
        <taxon>Glires</taxon>
        <taxon>Rodentia</taxon>
        <taxon>Myomorpha</taxon>
        <taxon>Muroidea</taxon>
        <taxon>Muridae</taxon>
        <taxon>Murinae</taxon>
        <taxon>Mus</taxon>
        <taxon>Mus</taxon>
    </lineage>
</organism>
<dbReference type="EMBL" id="AF150103">
    <property type="protein sequence ID" value="AAD40009.1"/>
    <property type="molecule type" value="mRNA"/>
</dbReference>
<dbReference type="EMBL" id="AK002949">
    <property type="protein sequence ID" value="BAB22474.1"/>
    <property type="molecule type" value="mRNA"/>
</dbReference>
<dbReference type="EMBL" id="AK003368">
    <property type="protein sequence ID" value="BAB22742.1"/>
    <property type="molecule type" value="mRNA"/>
</dbReference>
<dbReference type="EMBL" id="AK010994">
    <property type="protein sequence ID" value="BAB27313.1"/>
    <property type="molecule type" value="mRNA"/>
</dbReference>
<dbReference type="EMBL" id="AK166190">
    <property type="protein sequence ID" value="BAE38620.1"/>
    <property type="molecule type" value="mRNA"/>
</dbReference>
<dbReference type="EMBL" id="BC009158">
    <property type="protein sequence ID" value="AAH09158.1"/>
    <property type="molecule type" value="mRNA"/>
</dbReference>
<dbReference type="CCDS" id="CCDS21657.1"/>
<dbReference type="RefSeq" id="NP_001346984.1">
    <property type="nucleotide sequence ID" value="NM_001360055.1"/>
</dbReference>
<dbReference type="RefSeq" id="NP_001346985.1">
    <property type="nucleotide sequence ID" value="NM_001360056.1"/>
</dbReference>
<dbReference type="RefSeq" id="NP_062375.1">
    <property type="nucleotide sequence ID" value="NM_019502.3"/>
</dbReference>
<dbReference type="RefSeq" id="XP_006507437.1">
    <property type="nucleotide sequence ID" value="XM_006507374.3"/>
</dbReference>
<dbReference type="SMR" id="Q9WV96"/>
<dbReference type="BioGRID" id="199770">
    <property type="interactions" value="5"/>
</dbReference>
<dbReference type="FunCoup" id="Q9WV96">
    <property type="interactions" value="1574"/>
</dbReference>
<dbReference type="STRING" id="10090.ENSMUSP00000102395"/>
<dbReference type="PhosphoSitePlus" id="Q9WV96"/>
<dbReference type="PaxDb" id="10090-ENSMUSP00000102395"/>
<dbReference type="PeptideAtlas" id="Q9WV96"/>
<dbReference type="ProteomicsDB" id="254802"/>
<dbReference type="Pumba" id="Q9WV96"/>
<dbReference type="DNASU" id="14356"/>
<dbReference type="Ensembl" id="ENSMUST00000058333.10">
    <property type="protein sequence ID" value="ENSMUSP00000057061.4"/>
    <property type="gene ID" value="ENSMUSG00000089847.9"/>
</dbReference>
<dbReference type="Ensembl" id="ENSMUST00000106780.2">
    <property type="protein sequence ID" value="ENSMUSP00000102392.2"/>
    <property type="gene ID" value="ENSMUSG00000089847.9"/>
</dbReference>
<dbReference type="Ensembl" id="ENSMUST00000106783.8">
    <property type="protein sequence ID" value="ENSMUSP00000102395.2"/>
    <property type="gene ID" value="ENSMUSG00000089847.9"/>
</dbReference>
<dbReference type="Ensembl" id="ENSMUST00000142363.8">
    <property type="protein sequence ID" value="ENSMUSP00000148105.2"/>
    <property type="gene ID" value="ENSMUSG00000110234.3"/>
</dbReference>
<dbReference type="Ensembl" id="ENSMUST00000142874.9">
    <property type="protein sequence ID" value="ENSMUSP00000147621.2"/>
    <property type="gene ID" value="ENSMUSG00000110234.3"/>
</dbReference>
<dbReference type="Ensembl" id="ENSMUST00000211054.2">
    <property type="protein sequence ID" value="ENSMUSP00000148176.2"/>
    <property type="gene ID" value="ENSMUSG00000110234.3"/>
</dbReference>
<dbReference type="GeneID" id="14356"/>
<dbReference type="KEGG" id="mmu:14356"/>
<dbReference type="UCSC" id="uc009iys.1">
    <property type="organism name" value="mouse"/>
</dbReference>
<dbReference type="AGR" id="MGI:1315196"/>
<dbReference type="CTD" id="26515"/>
<dbReference type="MGI" id="MGI:1315196">
    <property type="gene designation" value="Timm10b"/>
</dbReference>
<dbReference type="VEuPathDB" id="HostDB:ENSMUSG00000089847"/>
<dbReference type="VEuPathDB" id="HostDB:ENSMUSG00000110234"/>
<dbReference type="eggNOG" id="KOG3479">
    <property type="taxonomic scope" value="Eukaryota"/>
</dbReference>
<dbReference type="GeneTree" id="ENSGT00900000143782"/>
<dbReference type="HOGENOM" id="CLU_141397_2_2_1"/>
<dbReference type="InParanoid" id="Q9WV96"/>
<dbReference type="OMA" id="FNRCVDN"/>
<dbReference type="PhylomeDB" id="Q9WV96"/>
<dbReference type="TreeFam" id="TF106188"/>
<dbReference type="BioGRID-ORCS" id="14356">
    <property type="hits" value="6 hits in 77 CRISPR screens"/>
</dbReference>
<dbReference type="ChiTaRS" id="Timm10b">
    <property type="organism name" value="mouse"/>
</dbReference>
<dbReference type="PRO" id="PR:Q9WV96"/>
<dbReference type="Proteomes" id="UP000000589">
    <property type="component" value="Chromosome 7"/>
</dbReference>
<dbReference type="RNAct" id="Q9WV96">
    <property type="molecule type" value="protein"/>
</dbReference>
<dbReference type="Bgee" id="ENSMUSG00000089847">
    <property type="expression patterns" value="Expressed in granulocyte and 202 other cell types or tissues"/>
</dbReference>
<dbReference type="ExpressionAtlas" id="Q9WV96">
    <property type="expression patterns" value="baseline and differential"/>
</dbReference>
<dbReference type="GO" id="GO:0042719">
    <property type="term" value="C:mitochondrial intermembrane space protein transporter complex"/>
    <property type="evidence" value="ECO:0007669"/>
    <property type="project" value="Ensembl"/>
</dbReference>
<dbReference type="GO" id="GO:0005739">
    <property type="term" value="C:mitochondrion"/>
    <property type="evidence" value="ECO:0007005"/>
    <property type="project" value="MGI"/>
</dbReference>
<dbReference type="GO" id="GO:0042721">
    <property type="term" value="C:TIM22 mitochondrial import inner membrane insertion complex"/>
    <property type="evidence" value="ECO:0000250"/>
    <property type="project" value="UniProtKB"/>
</dbReference>
<dbReference type="GO" id="GO:0046872">
    <property type="term" value="F:metal ion binding"/>
    <property type="evidence" value="ECO:0007669"/>
    <property type="project" value="UniProtKB-KW"/>
</dbReference>
<dbReference type="GO" id="GO:0015031">
    <property type="term" value="P:protein transport"/>
    <property type="evidence" value="ECO:0007669"/>
    <property type="project" value="UniProtKB-KW"/>
</dbReference>
<dbReference type="FunFam" id="1.10.287.810:FF:000006">
    <property type="entry name" value="mitochondrial import inner membrane translocase subunit Tim10 B"/>
    <property type="match status" value="1"/>
</dbReference>
<dbReference type="Gene3D" id="1.10.287.810">
    <property type="entry name" value="Mitochondrial import inner membrane translocase subunit tim13 like domains"/>
    <property type="match status" value="1"/>
</dbReference>
<dbReference type="InterPro" id="IPR050673">
    <property type="entry name" value="Mito_inner_translocase_sub"/>
</dbReference>
<dbReference type="InterPro" id="IPR004217">
    <property type="entry name" value="Tim10-like"/>
</dbReference>
<dbReference type="InterPro" id="IPR035427">
    <property type="entry name" value="Tim10-like_dom_sf"/>
</dbReference>
<dbReference type="PANTHER" id="PTHR13172">
    <property type="entry name" value="MITOCHONDRIAL IMPORT INNER MEMBRANE TRANSLOCASE SUBUNIT TIM9B"/>
    <property type="match status" value="1"/>
</dbReference>
<dbReference type="Pfam" id="PF02953">
    <property type="entry name" value="zf-Tim10_DDP"/>
    <property type="match status" value="1"/>
</dbReference>
<dbReference type="SUPFAM" id="SSF144122">
    <property type="entry name" value="Tim10-like"/>
    <property type="match status" value="1"/>
</dbReference>
<name>T10B_MOUSE</name>